<sequence length="244" mass="26995">MGCRDVHAATVLSFLCGIASVAGLFAGTLLPNWRKLRLITFNRNEKNLTIYTGLWVKCARYDGSSDCLMYDRTWYLSVDQLDLRVLQFALPLSIVIAMGALLLCLIGMCNTAFNSSVPNIKLAKCLVNSAGCHLVAGLLFFLAGTVSLSPSIWAIFYNSHLNRKFEPVFTFDYAVFVTIASSGGLFMTALLLFVWYCACKSLSSPFWQPLYSHAPGMHTYSQPYSSRSRLSAIEIDIPVVSHST</sequence>
<evidence type="ECO:0000250" key="1"/>
<evidence type="ECO:0000250" key="2">
    <source>
        <dbReference type="UniProtKB" id="P56749"/>
    </source>
</evidence>
<evidence type="ECO:0000255" key="3"/>
<evidence type="ECO:0000269" key="4">
    <source>
    </source>
</evidence>
<evidence type="ECO:0000305" key="5"/>
<evidence type="ECO:0007744" key="6">
    <source>
    </source>
</evidence>
<proteinExistence type="evidence at protein level"/>
<protein>
    <recommendedName>
        <fullName>Claudin-12</fullName>
    </recommendedName>
</protein>
<name>CLD12_MOUSE</name>
<comment type="function">
    <text evidence="1">Plays a major role in tight junction-specific obliteration of the intercellular space, through calcium-independent cell-adhesion activity.</text>
</comment>
<comment type="subunit">
    <text evidence="2">Interacts with OCLN.</text>
</comment>
<comment type="subcellular location">
    <subcellularLocation>
        <location evidence="4">Cell junction</location>
        <location evidence="4">Tight junction</location>
    </subcellularLocation>
    <subcellularLocation>
        <location evidence="2">Cell membrane</location>
        <topology evidence="3">Multi-pass membrane protein</topology>
    </subcellularLocation>
</comment>
<comment type="similarity">
    <text evidence="5">Belongs to the claudin family.</text>
</comment>
<accession>Q9ET43</accession>
<accession>Q3TM65</accession>
<accession>Q8BH13</accession>
<gene>
    <name type="primary">Cldn12</name>
</gene>
<feature type="chain" id="PRO_0000144766" description="Claudin-12">
    <location>
        <begin position="1"/>
        <end position="244"/>
    </location>
</feature>
<feature type="topological domain" description="Cytoplasmic" evidence="3">
    <location>
        <begin position="1"/>
        <end position="10"/>
    </location>
</feature>
<feature type="transmembrane region" description="Helical" evidence="3">
    <location>
        <begin position="11"/>
        <end position="31"/>
    </location>
</feature>
<feature type="topological domain" description="Extracellular" evidence="3">
    <location>
        <begin position="32"/>
        <end position="87"/>
    </location>
</feature>
<feature type="transmembrane region" description="Helical" evidence="3">
    <location>
        <begin position="88"/>
        <end position="108"/>
    </location>
</feature>
<feature type="topological domain" description="Cytoplasmic" evidence="3">
    <location>
        <begin position="109"/>
        <end position="135"/>
    </location>
</feature>
<feature type="transmembrane region" description="Helical" evidence="3">
    <location>
        <begin position="136"/>
        <end position="156"/>
    </location>
</feature>
<feature type="topological domain" description="Extracellular" evidence="3">
    <location>
        <begin position="157"/>
        <end position="174"/>
    </location>
</feature>
<feature type="transmembrane region" description="Helical" evidence="3">
    <location>
        <begin position="175"/>
        <end position="195"/>
    </location>
</feature>
<feature type="topological domain" description="Cytoplasmic" evidence="3">
    <location>
        <begin position="196"/>
        <end position="244"/>
    </location>
</feature>
<feature type="modified residue" description="Phosphoserine" evidence="2">
    <location>
        <position position="228"/>
    </location>
</feature>
<feature type="modified residue" description="Phosphoserine" evidence="6">
    <location>
        <position position="231"/>
    </location>
</feature>
<dbReference type="EMBL" id="AK039672">
    <property type="protein sequence ID" value="BAC30414.1"/>
    <property type="molecule type" value="mRNA"/>
</dbReference>
<dbReference type="EMBL" id="AK049331">
    <property type="protein sequence ID" value="BAC33687.1"/>
    <property type="molecule type" value="mRNA"/>
</dbReference>
<dbReference type="EMBL" id="AK132155">
    <property type="protein sequence ID" value="BAE21001.1"/>
    <property type="molecule type" value="mRNA"/>
</dbReference>
<dbReference type="EMBL" id="AK166110">
    <property type="protein sequence ID" value="BAE38577.1"/>
    <property type="molecule type" value="mRNA"/>
</dbReference>
<dbReference type="EMBL" id="BC024057">
    <property type="protein sequence ID" value="AAH24057.1"/>
    <property type="molecule type" value="mRNA"/>
</dbReference>
<dbReference type="EMBL" id="AF247664">
    <property type="protein sequence ID" value="AAF98801.1"/>
    <property type="molecule type" value="mRNA"/>
</dbReference>
<dbReference type="CCDS" id="CCDS19074.1"/>
<dbReference type="RefSeq" id="NP_001180588.1">
    <property type="nucleotide sequence ID" value="NM_001193659.2"/>
</dbReference>
<dbReference type="RefSeq" id="NP_001180589.1">
    <property type="nucleotide sequence ID" value="NM_001193660.2"/>
</dbReference>
<dbReference type="RefSeq" id="NP_001180590.1">
    <property type="nucleotide sequence ID" value="NM_001193661.2"/>
</dbReference>
<dbReference type="RefSeq" id="NP_001412601.1">
    <property type="nucleotide sequence ID" value="NM_001425672.1"/>
</dbReference>
<dbReference type="RefSeq" id="NP_001412602.1">
    <property type="nucleotide sequence ID" value="NM_001425673.1"/>
</dbReference>
<dbReference type="RefSeq" id="NP_075028.1">
    <property type="nucleotide sequence ID" value="NM_022890.3"/>
</dbReference>
<dbReference type="RefSeq" id="XP_006503661.1">
    <property type="nucleotide sequence ID" value="XM_006503598.5"/>
</dbReference>
<dbReference type="RefSeq" id="XP_011238975.1">
    <property type="nucleotide sequence ID" value="XM_011240673.2"/>
</dbReference>
<dbReference type="RefSeq" id="XP_011238976.1">
    <property type="nucleotide sequence ID" value="XM_011240674.1"/>
</dbReference>
<dbReference type="FunCoup" id="Q9ET43">
    <property type="interactions" value="562"/>
</dbReference>
<dbReference type="IntAct" id="Q9ET43">
    <property type="interactions" value="1"/>
</dbReference>
<dbReference type="MINT" id="Q9ET43"/>
<dbReference type="STRING" id="10090.ENSMUSP00000136988"/>
<dbReference type="GlyGen" id="Q9ET43">
    <property type="glycosylation" value="4 sites, 1 N-linked glycan (1 site), 1 O-linked glycan (3 sites)"/>
</dbReference>
<dbReference type="iPTMnet" id="Q9ET43"/>
<dbReference type="PhosphoSitePlus" id="Q9ET43"/>
<dbReference type="jPOST" id="Q9ET43"/>
<dbReference type="PaxDb" id="10090-ENSMUSP00000061928"/>
<dbReference type="PeptideAtlas" id="Q9ET43"/>
<dbReference type="ProteomicsDB" id="283290"/>
<dbReference type="Antibodypedia" id="35206">
    <property type="antibodies" value="216 antibodies from 27 providers"/>
</dbReference>
<dbReference type="DNASU" id="64945"/>
<dbReference type="Ensembl" id="ENSMUST00000060947.14">
    <property type="protein sequence ID" value="ENSMUSP00000061928.8"/>
    <property type="gene ID" value="ENSMUSG00000046798.15"/>
</dbReference>
<dbReference type="Ensembl" id="ENSMUST00000115445.8">
    <property type="protein sequence ID" value="ENSMUSP00000111105.2"/>
    <property type="gene ID" value="ENSMUSG00000046798.15"/>
</dbReference>
<dbReference type="Ensembl" id="ENSMUST00000115446.8">
    <property type="protein sequence ID" value="ENSMUSP00000111106.2"/>
    <property type="gene ID" value="ENSMUSG00000046798.15"/>
</dbReference>
<dbReference type="Ensembl" id="ENSMUST00000179804.8">
    <property type="protein sequence ID" value="ENSMUSP00000136988.2"/>
    <property type="gene ID" value="ENSMUSG00000046798.15"/>
</dbReference>
<dbReference type="GeneID" id="64945"/>
<dbReference type="KEGG" id="mmu:64945"/>
<dbReference type="UCSC" id="uc008wip.2">
    <property type="organism name" value="mouse"/>
</dbReference>
<dbReference type="AGR" id="MGI:1929288"/>
<dbReference type="CTD" id="9069"/>
<dbReference type="MGI" id="MGI:1929288">
    <property type="gene designation" value="Cldn12"/>
</dbReference>
<dbReference type="VEuPathDB" id="HostDB:ENSMUSG00000046798"/>
<dbReference type="eggNOG" id="ENOG502QR4G">
    <property type="taxonomic scope" value="Eukaryota"/>
</dbReference>
<dbReference type="GeneTree" id="ENSGT00400000022250"/>
<dbReference type="HOGENOM" id="CLU_063070_0_0_1"/>
<dbReference type="InParanoid" id="Q9ET43"/>
<dbReference type="OMA" id="FYNTHLN"/>
<dbReference type="OrthoDB" id="3031595at2759"/>
<dbReference type="PhylomeDB" id="Q9ET43"/>
<dbReference type="TreeFam" id="TF331972"/>
<dbReference type="BioGRID-ORCS" id="64945">
    <property type="hits" value="2 hits in 77 CRISPR screens"/>
</dbReference>
<dbReference type="PRO" id="PR:Q9ET43"/>
<dbReference type="Proteomes" id="UP000000589">
    <property type="component" value="Chromosome 5"/>
</dbReference>
<dbReference type="RNAct" id="Q9ET43">
    <property type="molecule type" value="protein"/>
</dbReference>
<dbReference type="Bgee" id="ENSMUSG00000046798">
    <property type="expression patterns" value="Expressed in dorsal pancreas and 216 other cell types or tissues"/>
</dbReference>
<dbReference type="GO" id="GO:0005923">
    <property type="term" value="C:bicellular tight junction"/>
    <property type="evidence" value="ECO:0000250"/>
    <property type="project" value="UniProtKB"/>
</dbReference>
<dbReference type="GO" id="GO:0071944">
    <property type="term" value="C:cell periphery"/>
    <property type="evidence" value="ECO:0000314"/>
    <property type="project" value="MGI"/>
</dbReference>
<dbReference type="GO" id="GO:0016328">
    <property type="term" value="C:lateral plasma membrane"/>
    <property type="evidence" value="ECO:0000314"/>
    <property type="project" value="MGI"/>
</dbReference>
<dbReference type="GO" id="GO:0070160">
    <property type="term" value="C:tight junction"/>
    <property type="evidence" value="ECO:0000314"/>
    <property type="project" value="ARUK-UCL"/>
</dbReference>
<dbReference type="GO" id="GO:0042802">
    <property type="term" value="F:identical protein binding"/>
    <property type="evidence" value="ECO:0000250"/>
    <property type="project" value="UniProtKB"/>
</dbReference>
<dbReference type="GO" id="GO:0016338">
    <property type="term" value="P:calcium-independent cell-cell adhesion via plasma membrane cell-adhesion molecules"/>
    <property type="evidence" value="ECO:0000250"/>
    <property type="project" value="UniProtKB"/>
</dbReference>
<dbReference type="Gene3D" id="1.20.140.150">
    <property type="match status" value="1"/>
</dbReference>
<dbReference type="InterPro" id="IPR013287">
    <property type="entry name" value="Claudin12"/>
</dbReference>
<dbReference type="InterPro" id="IPR017974">
    <property type="entry name" value="Claudin_CS"/>
</dbReference>
<dbReference type="PANTHER" id="PTHR16703">
    <property type="entry name" value="CLAUDIN-12"/>
    <property type="match status" value="1"/>
</dbReference>
<dbReference type="PANTHER" id="PTHR16703:SF3">
    <property type="entry name" value="CLAUDIN-12"/>
    <property type="match status" value="1"/>
</dbReference>
<dbReference type="PRINTS" id="PR01872">
    <property type="entry name" value="CLAUDIN12"/>
</dbReference>
<dbReference type="PROSITE" id="PS01346">
    <property type="entry name" value="CLAUDIN"/>
    <property type="match status" value="1"/>
</dbReference>
<organism>
    <name type="scientific">Mus musculus</name>
    <name type="common">Mouse</name>
    <dbReference type="NCBI Taxonomy" id="10090"/>
    <lineage>
        <taxon>Eukaryota</taxon>
        <taxon>Metazoa</taxon>
        <taxon>Chordata</taxon>
        <taxon>Craniata</taxon>
        <taxon>Vertebrata</taxon>
        <taxon>Euteleostomi</taxon>
        <taxon>Mammalia</taxon>
        <taxon>Eutheria</taxon>
        <taxon>Euarchontoglires</taxon>
        <taxon>Glires</taxon>
        <taxon>Rodentia</taxon>
        <taxon>Myomorpha</taxon>
        <taxon>Muroidea</taxon>
        <taxon>Muridae</taxon>
        <taxon>Murinae</taxon>
        <taxon>Mus</taxon>
        <taxon>Mus</taxon>
    </lineage>
</organism>
<reference key="1">
    <citation type="journal article" date="2005" name="Science">
        <title>The transcriptional landscape of the mammalian genome.</title>
        <authorList>
            <person name="Carninci P."/>
            <person name="Kasukawa T."/>
            <person name="Katayama S."/>
            <person name="Gough J."/>
            <person name="Frith M.C."/>
            <person name="Maeda N."/>
            <person name="Oyama R."/>
            <person name="Ravasi T."/>
            <person name="Lenhard B."/>
            <person name="Wells C."/>
            <person name="Kodzius R."/>
            <person name="Shimokawa K."/>
            <person name="Bajic V.B."/>
            <person name="Brenner S.E."/>
            <person name="Batalov S."/>
            <person name="Forrest A.R."/>
            <person name="Zavolan M."/>
            <person name="Davis M.J."/>
            <person name="Wilming L.G."/>
            <person name="Aidinis V."/>
            <person name="Allen J.E."/>
            <person name="Ambesi-Impiombato A."/>
            <person name="Apweiler R."/>
            <person name="Aturaliya R.N."/>
            <person name="Bailey T.L."/>
            <person name="Bansal M."/>
            <person name="Baxter L."/>
            <person name="Beisel K.W."/>
            <person name="Bersano T."/>
            <person name="Bono H."/>
            <person name="Chalk A.M."/>
            <person name="Chiu K.P."/>
            <person name="Choudhary V."/>
            <person name="Christoffels A."/>
            <person name="Clutterbuck D.R."/>
            <person name="Crowe M.L."/>
            <person name="Dalla E."/>
            <person name="Dalrymple B.P."/>
            <person name="de Bono B."/>
            <person name="Della Gatta G."/>
            <person name="di Bernardo D."/>
            <person name="Down T."/>
            <person name="Engstrom P."/>
            <person name="Fagiolini M."/>
            <person name="Faulkner G."/>
            <person name="Fletcher C.F."/>
            <person name="Fukushima T."/>
            <person name="Furuno M."/>
            <person name="Futaki S."/>
            <person name="Gariboldi M."/>
            <person name="Georgii-Hemming P."/>
            <person name="Gingeras T.R."/>
            <person name="Gojobori T."/>
            <person name="Green R.E."/>
            <person name="Gustincich S."/>
            <person name="Harbers M."/>
            <person name="Hayashi Y."/>
            <person name="Hensch T.K."/>
            <person name="Hirokawa N."/>
            <person name="Hill D."/>
            <person name="Huminiecki L."/>
            <person name="Iacono M."/>
            <person name="Ikeo K."/>
            <person name="Iwama A."/>
            <person name="Ishikawa T."/>
            <person name="Jakt M."/>
            <person name="Kanapin A."/>
            <person name="Katoh M."/>
            <person name="Kawasawa Y."/>
            <person name="Kelso J."/>
            <person name="Kitamura H."/>
            <person name="Kitano H."/>
            <person name="Kollias G."/>
            <person name="Krishnan S.P."/>
            <person name="Kruger A."/>
            <person name="Kummerfeld S.K."/>
            <person name="Kurochkin I.V."/>
            <person name="Lareau L.F."/>
            <person name="Lazarevic D."/>
            <person name="Lipovich L."/>
            <person name="Liu J."/>
            <person name="Liuni S."/>
            <person name="McWilliam S."/>
            <person name="Madan Babu M."/>
            <person name="Madera M."/>
            <person name="Marchionni L."/>
            <person name="Matsuda H."/>
            <person name="Matsuzawa S."/>
            <person name="Miki H."/>
            <person name="Mignone F."/>
            <person name="Miyake S."/>
            <person name="Morris K."/>
            <person name="Mottagui-Tabar S."/>
            <person name="Mulder N."/>
            <person name="Nakano N."/>
            <person name="Nakauchi H."/>
            <person name="Ng P."/>
            <person name="Nilsson R."/>
            <person name="Nishiguchi S."/>
            <person name="Nishikawa S."/>
            <person name="Nori F."/>
            <person name="Ohara O."/>
            <person name="Okazaki Y."/>
            <person name="Orlando V."/>
            <person name="Pang K.C."/>
            <person name="Pavan W.J."/>
            <person name="Pavesi G."/>
            <person name="Pesole G."/>
            <person name="Petrovsky N."/>
            <person name="Piazza S."/>
            <person name="Reed J."/>
            <person name="Reid J.F."/>
            <person name="Ring B.Z."/>
            <person name="Ringwald M."/>
            <person name="Rost B."/>
            <person name="Ruan Y."/>
            <person name="Salzberg S.L."/>
            <person name="Sandelin A."/>
            <person name="Schneider C."/>
            <person name="Schoenbach C."/>
            <person name="Sekiguchi K."/>
            <person name="Semple C.A."/>
            <person name="Seno S."/>
            <person name="Sessa L."/>
            <person name="Sheng Y."/>
            <person name="Shibata Y."/>
            <person name="Shimada H."/>
            <person name="Shimada K."/>
            <person name="Silva D."/>
            <person name="Sinclair B."/>
            <person name="Sperling S."/>
            <person name="Stupka E."/>
            <person name="Sugiura K."/>
            <person name="Sultana R."/>
            <person name="Takenaka Y."/>
            <person name="Taki K."/>
            <person name="Tammoja K."/>
            <person name="Tan S.L."/>
            <person name="Tang S."/>
            <person name="Taylor M.S."/>
            <person name="Tegner J."/>
            <person name="Teichmann S.A."/>
            <person name="Ueda H.R."/>
            <person name="van Nimwegen E."/>
            <person name="Verardo R."/>
            <person name="Wei C.L."/>
            <person name="Yagi K."/>
            <person name="Yamanishi H."/>
            <person name="Zabarovsky E."/>
            <person name="Zhu S."/>
            <person name="Zimmer A."/>
            <person name="Hide W."/>
            <person name="Bult C."/>
            <person name="Grimmond S.M."/>
            <person name="Teasdale R.D."/>
            <person name="Liu E.T."/>
            <person name="Brusic V."/>
            <person name="Quackenbush J."/>
            <person name="Wahlestedt C."/>
            <person name="Mattick J.S."/>
            <person name="Hume D.A."/>
            <person name="Kai C."/>
            <person name="Sasaki D."/>
            <person name="Tomaru Y."/>
            <person name="Fukuda S."/>
            <person name="Kanamori-Katayama M."/>
            <person name="Suzuki M."/>
            <person name="Aoki J."/>
            <person name="Arakawa T."/>
            <person name="Iida J."/>
            <person name="Imamura K."/>
            <person name="Itoh M."/>
            <person name="Kato T."/>
            <person name="Kawaji H."/>
            <person name="Kawagashira N."/>
            <person name="Kawashima T."/>
            <person name="Kojima M."/>
            <person name="Kondo S."/>
            <person name="Konno H."/>
            <person name="Nakano K."/>
            <person name="Ninomiya N."/>
            <person name="Nishio T."/>
            <person name="Okada M."/>
            <person name="Plessy C."/>
            <person name="Shibata K."/>
            <person name="Shiraki T."/>
            <person name="Suzuki S."/>
            <person name="Tagami M."/>
            <person name="Waki K."/>
            <person name="Watahiki A."/>
            <person name="Okamura-Oho Y."/>
            <person name="Suzuki H."/>
            <person name="Kawai J."/>
            <person name="Hayashizaki Y."/>
        </authorList>
    </citation>
    <scope>NUCLEOTIDE SEQUENCE [LARGE SCALE MRNA]</scope>
    <source>
        <strain>C57BL/6J</strain>
        <tissue>Head</tissue>
        <tissue>Lung</tissue>
        <tissue>Spinal cord</tissue>
    </source>
</reference>
<reference key="2">
    <citation type="journal article" date="2004" name="Genome Res.">
        <title>The status, quality, and expansion of the NIH full-length cDNA project: the Mammalian Gene Collection (MGC).</title>
        <authorList>
            <consortium name="The MGC Project Team"/>
        </authorList>
    </citation>
    <scope>NUCLEOTIDE SEQUENCE [LARGE SCALE MRNA]</scope>
    <source>
        <strain>FVB/N</strain>
        <tissue>Liver</tissue>
    </source>
</reference>
<reference key="3">
    <citation type="submission" date="2000-03" db="EMBL/GenBank/DDBJ databases">
        <authorList>
            <person name="Kiuchi Y."/>
            <person name="Morita K."/>
            <person name="Furuse M."/>
            <person name="Tsukita S."/>
        </authorList>
    </citation>
    <scope>NUCLEOTIDE SEQUENCE [MRNA] OF 10-237</scope>
    <source>
        <strain>ICR</strain>
    </source>
</reference>
<reference key="4">
    <citation type="journal article" date="2010" name="Cell">
        <title>A tissue-specific atlas of mouse protein phosphorylation and expression.</title>
        <authorList>
            <person name="Huttlin E.L."/>
            <person name="Jedrychowski M.P."/>
            <person name="Elias J.E."/>
            <person name="Goswami T."/>
            <person name="Rad R."/>
            <person name="Beausoleil S.A."/>
            <person name="Villen J."/>
            <person name="Haas W."/>
            <person name="Sowa M.E."/>
            <person name="Gygi S.P."/>
        </authorList>
    </citation>
    <scope>PHOSPHORYLATION [LARGE SCALE ANALYSIS] AT SER-231</scope>
    <scope>IDENTIFICATION BY MASS SPECTROMETRY [LARGE SCALE ANALYSIS]</scope>
    <source>
        <tissue>Brain</tissue>
        <tissue>Kidney</tissue>
        <tissue>Liver</tissue>
    </source>
</reference>
<reference key="5">
    <citation type="journal article" date="2019" name="Cell. Mol. Life Sci.">
        <title>Tight junction proteins at the blood-brain barrier: far more than claudin-5.</title>
        <authorList>
            <person name="Berndt P."/>
            <person name="Winkler L."/>
            <person name="Cording J."/>
            <person name="Breitkreuz-Korff O."/>
            <person name="Rex A."/>
            <person name="Dithmer S."/>
            <person name="Rausch V."/>
            <person name="Blasig R."/>
            <person name="Richter M."/>
            <person name="Sporbert A."/>
            <person name="Wolburg H."/>
            <person name="Blasig I.E."/>
            <person name="Haseloff R.F."/>
        </authorList>
    </citation>
    <scope>SUBCELLULAR LOCATION</scope>
</reference>
<keyword id="KW-0965">Cell junction</keyword>
<keyword id="KW-1003">Cell membrane</keyword>
<keyword id="KW-0472">Membrane</keyword>
<keyword id="KW-0597">Phosphoprotein</keyword>
<keyword id="KW-1185">Reference proteome</keyword>
<keyword id="KW-0796">Tight junction</keyword>
<keyword id="KW-0812">Transmembrane</keyword>
<keyword id="KW-1133">Transmembrane helix</keyword>